<organism>
    <name type="scientific">Rattus norvegicus</name>
    <name type="common">Rat</name>
    <dbReference type="NCBI Taxonomy" id="10116"/>
    <lineage>
        <taxon>Eukaryota</taxon>
        <taxon>Metazoa</taxon>
        <taxon>Chordata</taxon>
        <taxon>Craniata</taxon>
        <taxon>Vertebrata</taxon>
        <taxon>Euteleostomi</taxon>
        <taxon>Mammalia</taxon>
        <taxon>Eutheria</taxon>
        <taxon>Euarchontoglires</taxon>
        <taxon>Glires</taxon>
        <taxon>Rodentia</taxon>
        <taxon>Myomorpha</taxon>
        <taxon>Muroidea</taxon>
        <taxon>Muridae</taxon>
        <taxon>Murinae</taxon>
        <taxon>Rattus</taxon>
    </lineage>
</organism>
<feature type="signal peptide" evidence="1">
    <location>
        <begin position="1"/>
        <end position="18"/>
    </location>
</feature>
<feature type="chain" id="PRO_0000020737" description="Kidney androgen-regulated protein">
    <location>
        <begin position="19"/>
        <end position="120"/>
    </location>
</feature>
<sequence>MMICKVLVITVFCVLTVAFPSLDIDSINEELQDSIFDILNSTSDFQLASYEPSTSPPEDSTYQESNTDFMQTTYSKSIQISELSNGAETVSSSFLEEVTETSESTVEFPLAETTTFSSTS</sequence>
<protein>
    <recommendedName>
        <fullName>Kidney androgen-regulated protein</fullName>
        <shortName>ARP</shortName>
        <shortName>KAP</shortName>
    </recommendedName>
</protein>
<keyword id="KW-1185">Reference proteome</keyword>
<keyword id="KW-0964">Secreted</keyword>
<keyword id="KW-0732">Signal</keyword>
<reference key="1">
    <citation type="submission" date="1995-04" db="EMBL/GenBank/DDBJ databases">
        <authorList>
            <person name="Niu E.M."/>
            <person name="Crozat A."/>
            <person name="Catterall J.F."/>
        </authorList>
    </citation>
    <scope>NUCLEOTIDE SEQUENCE [MRNA]</scope>
    <source>
        <strain>Sprague-Dawley</strain>
        <tissue>Kidney</tissue>
    </source>
</reference>
<evidence type="ECO:0000255" key="1"/>
<evidence type="ECO:0000305" key="2"/>
<accession>Q62781</accession>
<dbReference type="EMBL" id="U25808">
    <property type="protein sequence ID" value="AAA67078.1"/>
    <property type="molecule type" value="mRNA"/>
</dbReference>
<dbReference type="RefSeq" id="NP_434689.1">
    <property type="nucleotide sequence ID" value="NM_052802.2"/>
</dbReference>
<dbReference type="STRING" id="10116.ENSRNOP00000007806"/>
<dbReference type="PhosphoSitePlus" id="Q62781"/>
<dbReference type="PaxDb" id="10116-ENSRNOP00000007806"/>
<dbReference type="Ensembl" id="ENSRNOT00000007806.3">
    <property type="protein sequence ID" value="ENSRNOP00000007806.1"/>
    <property type="gene ID" value="ENSRNOG00000005858.3"/>
</dbReference>
<dbReference type="GeneID" id="24937"/>
<dbReference type="KEGG" id="rno:24937"/>
<dbReference type="UCSC" id="RGD:2947">
    <property type="organism name" value="rat"/>
</dbReference>
<dbReference type="AGR" id="RGD:2947"/>
<dbReference type="CTD" id="16483"/>
<dbReference type="RGD" id="2947">
    <property type="gene designation" value="Kap"/>
</dbReference>
<dbReference type="GeneTree" id="ENSGT00520000057923"/>
<dbReference type="HOGENOM" id="CLU_2048990_0_0_1"/>
<dbReference type="InParanoid" id="Q62781"/>
<dbReference type="OMA" id="MICKVLV"/>
<dbReference type="OrthoDB" id="10340904at2759"/>
<dbReference type="PhylomeDB" id="Q62781"/>
<dbReference type="PRO" id="PR:Q62781"/>
<dbReference type="Proteomes" id="UP000002494">
    <property type="component" value="Chromosome 4"/>
</dbReference>
<dbReference type="Bgee" id="ENSRNOG00000005858">
    <property type="expression patterns" value="Expressed in kidney and 16 other cell types or tissues"/>
</dbReference>
<dbReference type="GO" id="GO:0005576">
    <property type="term" value="C:extracellular region"/>
    <property type="evidence" value="ECO:0007669"/>
    <property type="project" value="UniProtKB-SubCell"/>
</dbReference>
<dbReference type="InterPro" id="IPR028062">
    <property type="entry name" value="KAR_prot"/>
</dbReference>
<dbReference type="Pfam" id="PF15222">
    <property type="entry name" value="KAR"/>
    <property type="match status" value="1"/>
</dbReference>
<comment type="subcellular location">
    <subcellularLocation>
        <location evidence="2">Secreted</location>
    </subcellularLocation>
</comment>
<gene>
    <name type="primary">Kap</name>
</gene>
<proteinExistence type="evidence at transcript level"/>
<name>ANRE_RAT</name>